<organismHost>
    <name type="scientific">Acidianus convivator</name>
    <dbReference type="NCBI Taxonomy" id="269667"/>
</organismHost>
<feature type="chain" id="PRO_0000389067" description="Putative transmembrane protein ORF119">
    <location>
        <begin position="1"/>
        <end position="119"/>
    </location>
</feature>
<feature type="transmembrane region" description="Helical" evidence="1">
    <location>
        <begin position="9"/>
        <end position="29"/>
    </location>
</feature>
<feature type="transmembrane region" description="Helical" evidence="1">
    <location>
        <begin position="73"/>
        <end position="93"/>
    </location>
</feature>
<feature type="transmembrane region" description="Helical" evidence="1">
    <location>
        <begin position="95"/>
        <end position="115"/>
    </location>
</feature>
<reference key="1">
    <citation type="journal article" date="2005" name="Nature">
        <title>Virology: independent virus development outside a host.</title>
        <authorList>
            <person name="Haring M."/>
            <person name="Vestergaard G."/>
            <person name="Rachel R."/>
            <person name="Chen L."/>
            <person name="Garrett R.A."/>
            <person name="Prangishvili D."/>
        </authorList>
    </citation>
    <scope>NUCLEOTIDE SEQUENCE [GENOMIC DNA]</scope>
</reference>
<sequence length="119" mass="12596">MGLAPSLATLAIALVFLGISLIFLVPAMVQGLYSIVSGVFSVASSVSNETGCPQSTEVVQLSNQTASISVPSQYAGIYTLYLSFISFVGSIFTDPIALIMLILVSLIITLFAFYYKNQG</sequence>
<comment type="subcellular location">
    <subcellularLocation>
        <location evidence="2">Host membrane</location>
        <topology evidence="2">Multi-pass membrane protein</topology>
    </subcellularLocation>
</comment>
<name>Y119_ATV</name>
<protein>
    <recommendedName>
        <fullName>Putative transmembrane protein ORF119</fullName>
    </recommendedName>
</protein>
<accession>Q3V4S7</accession>
<proteinExistence type="predicted"/>
<organism>
    <name type="scientific">Acidianus two-tailed virus</name>
    <name type="common">ATV</name>
    <dbReference type="NCBI Taxonomy" id="315953"/>
    <lineage>
        <taxon>Viruses</taxon>
        <taxon>Viruses incertae sedis</taxon>
        <taxon>Bicaudaviridae</taxon>
        <taxon>Bicaudavirus</taxon>
    </lineage>
</organism>
<evidence type="ECO:0000255" key="1"/>
<evidence type="ECO:0000305" key="2"/>
<keyword id="KW-1043">Host membrane</keyword>
<keyword id="KW-0472">Membrane</keyword>
<keyword id="KW-1185">Reference proteome</keyword>
<keyword id="KW-0812">Transmembrane</keyword>
<keyword id="KW-1133">Transmembrane helix</keyword>
<dbReference type="EMBL" id="AJ888457">
    <property type="protein sequence ID" value="CAI59887.1"/>
    <property type="molecule type" value="Genomic_DNA"/>
</dbReference>
<dbReference type="RefSeq" id="YP_319843.1">
    <property type="nucleotide sequence ID" value="NC_007409.1"/>
</dbReference>
<dbReference type="SMR" id="Q3V4S7"/>
<dbReference type="GeneID" id="4484289"/>
<dbReference type="KEGG" id="vg:4484289"/>
<dbReference type="Proteomes" id="UP000002150">
    <property type="component" value="Genome"/>
</dbReference>
<dbReference type="GO" id="GO:0033644">
    <property type="term" value="C:host cell membrane"/>
    <property type="evidence" value="ECO:0007669"/>
    <property type="project" value="UniProtKB-SubCell"/>
</dbReference>
<dbReference type="GO" id="GO:0016020">
    <property type="term" value="C:membrane"/>
    <property type="evidence" value="ECO:0007669"/>
    <property type="project" value="UniProtKB-KW"/>
</dbReference>